<gene>
    <name type="primary">PABPC5</name>
    <name type="synonym">PABP5</name>
</gene>
<organism>
    <name type="scientific">Pongo pygmaeus</name>
    <name type="common">Bornean orangutan</name>
    <dbReference type="NCBI Taxonomy" id="9600"/>
    <lineage>
        <taxon>Eukaryota</taxon>
        <taxon>Metazoa</taxon>
        <taxon>Chordata</taxon>
        <taxon>Craniata</taxon>
        <taxon>Vertebrata</taxon>
        <taxon>Euteleostomi</taxon>
        <taxon>Mammalia</taxon>
        <taxon>Eutheria</taxon>
        <taxon>Euarchontoglires</taxon>
        <taxon>Primates</taxon>
        <taxon>Haplorrhini</taxon>
        <taxon>Catarrhini</taxon>
        <taxon>Hominidae</taxon>
        <taxon>Pongo</taxon>
    </lineage>
</organism>
<dbReference type="EMBL" id="AJ299079">
    <property type="protein sequence ID" value="CAC42822.1"/>
    <property type="molecule type" value="Genomic_DNA"/>
</dbReference>
<dbReference type="RefSeq" id="XP_054329052.1">
    <property type="nucleotide sequence ID" value="XM_054473077.2"/>
</dbReference>
<dbReference type="SMR" id="P60050"/>
<dbReference type="GeneID" id="129025317"/>
<dbReference type="GO" id="GO:0005737">
    <property type="term" value="C:cytoplasm"/>
    <property type="evidence" value="ECO:0007669"/>
    <property type="project" value="UniProtKB-SubCell"/>
</dbReference>
<dbReference type="GO" id="GO:0003723">
    <property type="term" value="F:RNA binding"/>
    <property type="evidence" value="ECO:0007669"/>
    <property type="project" value="UniProtKB-KW"/>
</dbReference>
<dbReference type="CDD" id="cd12378">
    <property type="entry name" value="RRM1_I_PABPs"/>
    <property type="match status" value="1"/>
</dbReference>
<dbReference type="CDD" id="cd12379">
    <property type="entry name" value="RRM2_I_PABPs"/>
    <property type="match status" value="1"/>
</dbReference>
<dbReference type="CDD" id="cd12380">
    <property type="entry name" value="RRM3_I_PABPs"/>
    <property type="match status" value="1"/>
</dbReference>
<dbReference type="FunFam" id="3.30.70.330:FF:000003">
    <property type="entry name" value="Polyadenylate-binding protein"/>
    <property type="match status" value="1"/>
</dbReference>
<dbReference type="FunFam" id="3.30.70.330:FF:000049">
    <property type="entry name" value="Polyadenylate-binding protein"/>
    <property type="match status" value="1"/>
</dbReference>
<dbReference type="FunFam" id="3.30.70.330:FF:000234">
    <property type="entry name" value="Polyadenylate-binding protein 5"/>
    <property type="match status" value="1"/>
</dbReference>
<dbReference type="FunFam" id="3.30.70.330:FF:000338">
    <property type="entry name" value="polyadenylate-binding protein 5"/>
    <property type="match status" value="1"/>
</dbReference>
<dbReference type="Gene3D" id="3.30.70.330">
    <property type="match status" value="4"/>
</dbReference>
<dbReference type="InterPro" id="IPR012677">
    <property type="entry name" value="Nucleotide-bd_a/b_plait_sf"/>
</dbReference>
<dbReference type="InterPro" id="IPR006515">
    <property type="entry name" value="PABP_1234"/>
</dbReference>
<dbReference type="InterPro" id="IPR034364">
    <property type="entry name" value="PABP_RRM1"/>
</dbReference>
<dbReference type="InterPro" id="IPR035979">
    <property type="entry name" value="RBD_domain_sf"/>
</dbReference>
<dbReference type="InterPro" id="IPR045305">
    <property type="entry name" value="RRM2_I_PABPs"/>
</dbReference>
<dbReference type="InterPro" id="IPR000504">
    <property type="entry name" value="RRM_dom"/>
</dbReference>
<dbReference type="InterPro" id="IPR003954">
    <property type="entry name" value="RRM_dom_euk"/>
</dbReference>
<dbReference type="NCBIfam" id="TIGR01628">
    <property type="entry name" value="PABP-1234"/>
    <property type="match status" value="1"/>
</dbReference>
<dbReference type="PANTHER" id="PTHR24012">
    <property type="entry name" value="RNA BINDING PROTEIN"/>
    <property type="match status" value="1"/>
</dbReference>
<dbReference type="Pfam" id="PF00076">
    <property type="entry name" value="RRM_1"/>
    <property type="match status" value="4"/>
</dbReference>
<dbReference type="SMART" id="SM00360">
    <property type="entry name" value="RRM"/>
    <property type="match status" value="4"/>
</dbReference>
<dbReference type="SMART" id="SM00361">
    <property type="entry name" value="RRM_1"/>
    <property type="match status" value="3"/>
</dbReference>
<dbReference type="SUPFAM" id="SSF54928">
    <property type="entry name" value="RNA-binding domain, RBD"/>
    <property type="match status" value="2"/>
</dbReference>
<dbReference type="PROSITE" id="PS50102">
    <property type="entry name" value="RRM"/>
    <property type="match status" value="4"/>
</dbReference>
<protein>
    <recommendedName>
        <fullName>Polyadenylate-binding protein 5</fullName>
        <shortName>PABP-5</shortName>
        <shortName>Poly(A)-binding protein 5</shortName>
    </recommendedName>
</protein>
<name>PABP5_PONPY</name>
<keyword id="KW-0963">Cytoplasm</keyword>
<keyword id="KW-0677">Repeat</keyword>
<keyword id="KW-0694">RNA-binding</keyword>
<proteinExistence type="inferred from homology"/>
<feature type="chain" id="PRO_0000081709" description="Polyadenylate-binding protein 5">
    <location>
        <begin position="1"/>
        <end position="382"/>
    </location>
</feature>
<feature type="domain" description="RRM 1" evidence="2">
    <location>
        <begin position="18"/>
        <end position="96"/>
    </location>
</feature>
<feature type="domain" description="RRM 2" evidence="2">
    <location>
        <begin position="106"/>
        <end position="182"/>
    </location>
</feature>
<feature type="domain" description="RRM 3" evidence="2">
    <location>
        <begin position="199"/>
        <end position="276"/>
    </location>
</feature>
<feature type="domain" description="RRM 4" evidence="2">
    <location>
        <begin position="302"/>
        <end position="378"/>
    </location>
</feature>
<evidence type="ECO:0000250" key="1"/>
<evidence type="ECO:0000255" key="2">
    <source>
        <dbReference type="PROSITE-ProRule" id="PRU00176"/>
    </source>
</evidence>
<reference key="1">
    <citation type="journal article" date="2001" name="Genomics">
        <title>A novel poly(A)-binding protein gene (PABPC5) maps to an X-specific subinterval in the Xq21.3/Yp11.2 homology block of the human sex chromosomes.</title>
        <authorList>
            <person name="Blanco P."/>
            <person name="Sargent C.A."/>
            <person name="Boucher C.A."/>
            <person name="Howell G."/>
            <person name="Ross M."/>
            <person name="Affara N.A."/>
        </authorList>
    </citation>
    <scope>NUCLEOTIDE SEQUENCE [GENOMIC DNA]</scope>
</reference>
<comment type="function">
    <text evidence="1">Binds the poly(A) tail of mRNA. May be involved in cytoplasmic regulatory processes of mRNA metabolism. Can probably bind to cytoplasmic RNA sequences other than poly(A) in vivo (By similarity).</text>
</comment>
<comment type="subcellular location">
    <subcellularLocation>
        <location evidence="1">Cytoplasm</location>
    </subcellularLocation>
</comment>
<sequence length="382" mass="43331">MGSGEPNPAGKKKKYLKAALYVGDLDPDVTEDMLYKKFRPAGPLRFTRICRDPVTRSPLGYGYVNFRFPADAEWALNTMNFDLINGKPFRLMWSQPDDRLRKSGVGNIFIKNLDKSIDNRALFYLFSAFGNILSCKVVCDDNGSKGYAYVHFDSLAAANRAIWHMNGVRLNNRQVYVGRFKFPEERAAEVRTRDRATFTNVFVKNIGDDIDDEKLKELFCEYGPTESVKVIRDASGKSKGFGFVRYETHEAAQKAVLDLHGKSIDGKVLYVGRAQKKIERLAELRRRFERLRLKEKSRPPGVPIYIKNLDETINDEKLKEEFSSFGSISRAKVMMEVGQGKGFGVVCFSSFEEATKAVDEMNGRIVGSKPLHVTLGQARRRC</sequence>
<accession>P60050</accession>
<accession>Q95J70</accession>